<feature type="chain" id="PRO_0000066976" description="B-cell lymphoma 3 protein">
    <location>
        <begin position="1"/>
        <end position="454"/>
    </location>
</feature>
<feature type="repeat" description="ANK 1">
    <location>
        <begin position="134"/>
        <end position="163"/>
    </location>
</feature>
<feature type="repeat" description="ANK 2">
    <location>
        <begin position="171"/>
        <end position="200"/>
    </location>
</feature>
<feature type="repeat" description="ANK 3">
    <location>
        <begin position="204"/>
        <end position="235"/>
    </location>
</feature>
<feature type="repeat" description="ANK 4">
    <location>
        <begin position="241"/>
        <end position="270"/>
    </location>
</feature>
<feature type="repeat" description="ANK 5">
    <location>
        <begin position="275"/>
        <end position="304"/>
    </location>
</feature>
<feature type="repeat" description="ANK 6">
    <location>
        <begin position="308"/>
        <end position="337"/>
    </location>
</feature>
<feature type="repeat" description="ANK 7">
    <location>
        <begin position="338"/>
        <end position="367"/>
    </location>
</feature>
<feature type="region of interest" description="Disordered" evidence="2">
    <location>
        <begin position="1"/>
        <end position="50"/>
    </location>
</feature>
<feature type="region of interest" description="Disordered" evidence="2">
    <location>
        <begin position="360"/>
        <end position="454"/>
    </location>
</feature>
<feature type="compositionally biased region" description="Low complexity" evidence="2">
    <location>
        <begin position="21"/>
        <end position="31"/>
    </location>
</feature>
<feature type="compositionally biased region" description="Polar residues" evidence="2">
    <location>
        <begin position="365"/>
        <end position="381"/>
    </location>
</feature>
<feature type="compositionally biased region" description="Low complexity" evidence="2">
    <location>
        <begin position="382"/>
        <end position="404"/>
    </location>
</feature>
<feature type="compositionally biased region" description="Pro residues" evidence="2">
    <location>
        <begin position="405"/>
        <end position="418"/>
    </location>
</feature>
<feature type="compositionally biased region" description="Low complexity" evidence="2">
    <location>
        <begin position="432"/>
        <end position="442"/>
    </location>
</feature>
<feature type="compositionally biased region" description="Pro residues" evidence="2">
    <location>
        <begin position="443"/>
        <end position="454"/>
    </location>
</feature>
<feature type="modified residue" description="Phosphoserine" evidence="8">
    <location>
        <position position="41"/>
    </location>
</feature>
<feature type="modified residue" description="Phosphoserine" evidence="8">
    <location>
        <position position="374"/>
    </location>
</feature>
<feature type="modified residue" description="Phosphoserine; by GSK3" evidence="3">
    <location>
        <position position="402"/>
    </location>
</feature>
<feature type="modified residue" description="Phosphoserine; by GSK3" evidence="3">
    <location>
        <position position="406"/>
    </location>
</feature>
<feature type="helix" evidence="9">
    <location>
        <begin position="138"/>
        <end position="144"/>
    </location>
</feature>
<feature type="helix" evidence="9">
    <location>
        <begin position="148"/>
        <end position="160"/>
    </location>
</feature>
<feature type="helix" evidence="9">
    <location>
        <begin position="175"/>
        <end position="181"/>
    </location>
</feature>
<feature type="helix" evidence="9">
    <location>
        <begin position="185"/>
        <end position="193"/>
    </location>
</feature>
<feature type="helix" evidence="9">
    <location>
        <begin position="208"/>
        <end position="214"/>
    </location>
</feature>
<feature type="helix" evidence="9">
    <location>
        <begin position="218"/>
        <end position="227"/>
    </location>
</feature>
<feature type="helix" evidence="9">
    <location>
        <begin position="245"/>
        <end position="252"/>
    </location>
</feature>
<feature type="helix" evidence="9">
    <location>
        <begin position="255"/>
        <end position="263"/>
    </location>
</feature>
<feature type="turn" evidence="9">
    <location>
        <begin position="273"/>
        <end position="275"/>
    </location>
</feature>
<feature type="helix" evidence="9">
    <location>
        <begin position="279"/>
        <end position="285"/>
    </location>
</feature>
<feature type="helix" evidence="9">
    <location>
        <begin position="289"/>
        <end position="297"/>
    </location>
</feature>
<feature type="helix" evidence="9">
    <location>
        <begin position="312"/>
        <end position="319"/>
    </location>
</feature>
<feature type="helix" evidence="9">
    <location>
        <begin position="322"/>
        <end position="330"/>
    </location>
</feature>
<feature type="turn" evidence="9">
    <location>
        <begin position="345"/>
        <end position="348"/>
    </location>
</feature>
<feature type="helix" evidence="9">
    <location>
        <begin position="352"/>
        <end position="358"/>
    </location>
</feature>
<comment type="function">
    <text evidence="1 6">Contributes to the regulation of transcriptional activation of NF-kappa-B target genes. In the cytoplasm, inhibits the nuclear translocation of the NF-kappa-B p50 subunit. In the nucleus, acts as transcriptional activator that promotes transcription of NF-kappa-B target genes. Contributes to the regulation of cell proliferation (By similarity).</text>
</comment>
<comment type="subunit">
    <text evidence="1">Component of a complex consisting of the NF-kappa-B p52-p52 homodimer and BCL3. Component of a complex consisting of the NF-kappa-B p50-p50 homodimer and BCL3. Interacts with N4BP2, COPS5 and PIR. Interacts with CYLD (By similarity).</text>
</comment>
<comment type="interaction">
    <interactant intactId="EBI-958997">
        <id>P20749</id>
    </interactant>
    <interactant intactId="EBI-958922">
        <id>O95999</id>
        <label>BCL10</label>
    </interactant>
    <organismsDiffer>false</organismsDiffer>
    <experiments>3</experiments>
</comment>
<comment type="interaction">
    <interactant intactId="EBI-958997">
        <id>P20749</id>
    </interactant>
    <interactant intactId="EBI-741533">
        <id>P56545</id>
        <label>CTBP2</label>
    </interactant>
    <organismsDiffer>false</organismsDiffer>
    <experiments>2</experiments>
</comment>
<comment type="interaction">
    <interactant intactId="EBI-958997">
        <id>P20749</id>
    </interactant>
    <interactant intactId="EBI-1348">
        <id>P06239</id>
        <label>LCK</label>
    </interactant>
    <organismsDiffer>false</organismsDiffer>
    <experiments>3</experiments>
</comment>
<comment type="interaction">
    <interactant intactId="EBI-958997">
        <id>P20749</id>
    </interactant>
    <interactant intactId="EBI-2811583">
        <id>Q9BVL2</id>
        <label>NUP58</label>
    </interactant>
    <organismsDiffer>false</organismsDiffer>
    <experiments>3</experiments>
</comment>
<comment type="subcellular location">
    <subcellularLocation>
        <location>Nucleus</location>
    </subcellularLocation>
    <subcellularLocation>
        <location evidence="1">Cytoplasm</location>
    </subcellularLocation>
    <subcellularLocation>
        <location evidence="1">Cytoplasm</location>
        <location evidence="1">Perinuclear region</location>
    </subcellularLocation>
    <text evidence="1">Ubiquitination via 'Lys-63'-linked ubiquitin chains is required for nuclear accumulation.</text>
</comment>
<comment type="PTM">
    <text evidence="1">Polyubiquitinated. Ubiquitination via 'Lys-63'-linked ubiquitin chains is required for nuclear accumulation. Deubiquitinated by CYLD, which acts on 'Lys-63'-linked ubiquitin chains. Deubiquitination by CYLD prevents nuclear accumulation (By similarity).</text>
</comment>
<comment type="PTM">
    <text evidence="3">Activated by phosphorylation.</text>
</comment>
<comment type="disease">
    <text evidence="4 5">A chromosomal aberration involving BCL3 may be a cause of B-cell chronic lymphocytic leukemia (B-CLL). Translocation t(14;19)(q32;q13.1) with immunoglobulin gene regions.</text>
</comment>
<comment type="caution">
    <text evidence="7">It is uncertain whether Met-1 or Met-9 is the initiator.</text>
</comment>
<comment type="sequence caution" evidence="7">
    <conflict type="erroneous initiation">
        <sequence resource="EMBL-CDS" id="AAA51815"/>
    </conflict>
    <text>Truncated N-terminus.</text>
</comment>
<comment type="sequence caution" evidence="7">
    <conflict type="erroneous initiation">
        <sequence resource="EMBL-CDS" id="AAA51816"/>
    </conflict>
    <text>Truncated N-terminus.</text>
</comment>
<comment type="sequence caution" evidence="7">
    <conflict type="erroneous initiation">
        <sequence resource="EMBL-CDS" id="AAH64993"/>
    </conflict>
    <text>Truncated N-terminus.</text>
</comment>
<keyword id="KW-0002">3D-structure</keyword>
<keyword id="KW-0010">Activator</keyword>
<keyword id="KW-0040">ANK repeat</keyword>
<keyword id="KW-0160">Chromosomal rearrangement</keyword>
<keyword id="KW-0963">Cytoplasm</keyword>
<keyword id="KW-0539">Nucleus</keyword>
<keyword id="KW-0597">Phosphoprotein</keyword>
<keyword id="KW-1267">Proteomics identification</keyword>
<keyword id="KW-0656">Proto-oncogene</keyword>
<keyword id="KW-1185">Reference proteome</keyword>
<keyword id="KW-0677">Repeat</keyword>
<keyword id="KW-0804">Transcription</keyword>
<keyword id="KW-0805">Transcription regulation</keyword>
<keyword id="KW-0832">Ubl conjugation</keyword>
<dbReference type="EMBL" id="M31731">
    <property type="protein sequence ID" value="AAA51816.1"/>
    <property type="status" value="ALT_INIT"/>
    <property type="molecule type" value="Genomic_DNA"/>
</dbReference>
<dbReference type="EMBL" id="M31732">
    <property type="protein sequence ID" value="AAA51815.1"/>
    <property type="status" value="ALT_INIT"/>
    <property type="molecule type" value="mRNA"/>
</dbReference>
<dbReference type="EMBL" id="AC092066">
    <property type="status" value="NOT_ANNOTATED_CDS"/>
    <property type="molecule type" value="Genomic_DNA"/>
</dbReference>
<dbReference type="EMBL" id="BC064993">
    <property type="protein sequence ID" value="AAH64993.1"/>
    <property type="status" value="ALT_INIT"/>
    <property type="molecule type" value="mRNA"/>
</dbReference>
<dbReference type="EMBL" id="AH006679">
    <property type="protein sequence ID" value="AAC51348.1"/>
    <property type="molecule type" value="Genomic_DNA"/>
</dbReference>
<dbReference type="CCDS" id="CCDS12642.2"/>
<dbReference type="PIR" id="A34794">
    <property type="entry name" value="A34794"/>
</dbReference>
<dbReference type="RefSeq" id="NP_005169.2">
    <property type="nucleotide sequence ID" value="NM_005178.5"/>
</dbReference>
<dbReference type="PDB" id="1K1A">
    <property type="method" value="X-ray"/>
    <property type="resolution" value="1.86 A"/>
    <property type="chains" value="A=127-367"/>
</dbReference>
<dbReference type="PDB" id="1K1B">
    <property type="method" value="X-ray"/>
    <property type="resolution" value="1.90 A"/>
    <property type="chains" value="A=127-367"/>
</dbReference>
<dbReference type="PDBsum" id="1K1A"/>
<dbReference type="PDBsum" id="1K1B"/>
<dbReference type="SMR" id="P20749"/>
<dbReference type="BioGRID" id="107074">
    <property type="interactions" value="49"/>
</dbReference>
<dbReference type="CORUM" id="P20749"/>
<dbReference type="FunCoup" id="P20749">
    <property type="interactions" value="312"/>
</dbReference>
<dbReference type="IntAct" id="P20749">
    <property type="interactions" value="12"/>
</dbReference>
<dbReference type="MINT" id="P20749"/>
<dbReference type="STRING" id="9606.ENSP00000164227"/>
<dbReference type="ChEMBL" id="CHEMBL4523197"/>
<dbReference type="GuidetoPHARMACOLOGY" id="3232"/>
<dbReference type="iPTMnet" id="P20749"/>
<dbReference type="PhosphoSitePlus" id="P20749"/>
<dbReference type="BioMuta" id="BCL3"/>
<dbReference type="DMDM" id="294862410"/>
<dbReference type="jPOST" id="P20749"/>
<dbReference type="MassIVE" id="P20749"/>
<dbReference type="PaxDb" id="9606-ENSP00000164227"/>
<dbReference type="PeptideAtlas" id="P20749"/>
<dbReference type="ProteomicsDB" id="53783"/>
<dbReference type="Pumba" id="P20749"/>
<dbReference type="Antibodypedia" id="3672">
    <property type="antibodies" value="398 antibodies from 42 providers"/>
</dbReference>
<dbReference type="DNASU" id="602"/>
<dbReference type="Ensembl" id="ENST00000164227.10">
    <property type="protein sequence ID" value="ENSP00000164227.5"/>
    <property type="gene ID" value="ENSG00000069399.15"/>
</dbReference>
<dbReference type="GeneID" id="602"/>
<dbReference type="KEGG" id="hsa:602"/>
<dbReference type="MANE-Select" id="ENST00000164227.10">
    <property type="protein sequence ID" value="ENSP00000164227.5"/>
    <property type="RefSeq nucleotide sequence ID" value="NM_005178.5"/>
    <property type="RefSeq protein sequence ID" value="NP_005169.2"/>
</dbReference>
<dbReference type="UCSC" id="uc010xxe.3">
    <property type="organism name" value="human"/>
</dbReference>
<dbReference type="AGR" id="HGNC:998"/>
<dbReference type="CTD" id="602"/>
<dbReference type="DisGeNET" id="602"/>
<dbReference type="GeneCards" id="BCL3"/>
<dbReference type="HGNC" id="HGNC:998">
    <property type="gene designation" value="BCL3"/>
</dbReference>
<dbReference type="HPA" id="ENSG00000069399">
    <property type="expression patterns" value="Tissue enhanced (liver)"/>
</dbReference>
<dbReference type="MalaCards" id="BCL3"/>
<dbReference type="MIM" id="109560">
    <property type="type" value="gene"/>
</dbReference>
<dbReference type="neXtProt" id="NX_P20749"/>
<dbReference type="OpenTargets" id="ENSG00000069399"/>
<dbReference type="PharmGKB" id="PA25310"/>
<dbReference type="VEuPathDB" id="HostDB:ENSG00000069399"/>
<dbReference type="eggNOG" id="KOG0504">
    <property type="taxonomic scope" value="Eukaryota"/>
</dbReference>
<dbReference type="GeneTree" id="ENSGT00940000161392"/>
<dbReference type="HOGENOM" id="CLU_720685_0_0_1"/>
<dbReference type="InParanoid" id="P20749"/>
<dbReference type="OMA" id="MMCSMEH"/>
<dbReference type="OrthoDB" id="10254947at2759"/>
<dbReference type="PAN-GO" id="P20749">
    <property type="GO annotations" value="6 GO annotations based on evolutionary models"/>
</dbReference>
<dbReference type="PhylomeDB" id="P20749"/>
<dbReference type="TreeFam" id="TF320166"/>
<dbReference type="PathwayCommons" id="P20749"/>
<dbReference type="SignaLink" id="P20749"/>
<dbReference type="SIGNOR" id="P20749"/>
<dbReference type="BioGRID-ORCS" id="602">
    <property type="hits" value="14 hits in 1160 CRISPR screens"/>
</dbReference>
<dbReference type="ChiTaRS" id="BCL3">
    <property type="organism name" value="human"/>
</dbReference>
<dbReference type="EvolutionaryTrace" id="P20749"/>
<dbReference type="GeneWiki" id="BCL3"/>
<dbReference type="GenomeRNAi" id="602"/>
<dbReference type="Pharos" id="P20749">
    <property type="development level" value="Tchem"/>
</dbReference>
<dbReference type="PRO" id="PR:P20749"/>
<dbReference type="Proteomes" id="UP000005640">
    <property type="component" value="Chromosome 19"/>
</dbReference>
<dbReference type="RNAct" id="P20749">
    <property type="molecule type" value="protein"/>
</dbReference>
<dbReference type="Bgee" id="ENSG00000069399">
    <property type="expression patterns" value="Expressed in left uterine tube and 177 other cell types or tissues"/>
</dbReference>
<dbReference type="ExpressionAtlas" id="P20749">
    <property type="expression patterns" value="baseline and differential"/>
</dbReference>
<dbReference type="GO" id="GO:0032996">
    <property type="term" value="C:Bcl3-Bcl10 complex"/>
    <property type="evidence" value="ECO:0000314"/>
    <property type="project" value="UniProtKB"/>
</dbReference>
<dbReference type="GO" id="GO:0033257">
    <property type="term" value="C:Bcl3/NF-kappaB2 complex"/>
    <property type="evidence" value="ECO:0000314"/>
    <property type="project" value="UniProtKB"/>
</dbReference>
<dbReference type="GO" id="GO:0036064">
    <property type="term" value="C:ciliary basal body"/>
    <property type="evidence" value="ECO:0000314"/>
    <property type="project" value="HPA"/>
</dbReference>
<dbReference type="GO" id="GO:0005737">
    <property type="term" value="C:cytoplasm"/>
    <property type="evidence" value="ECO:0000314"/>
    <property type="project" value="UniProtKB"/>
</dbReference>
<dbReference type="GO" id="GO:0005829">
    <property type="term" value="C:cytosol"/>
    <property type="evidence" value="ECO:0000314"/>
    <property type="project" value="HPA"/>
</dbReference>
<dbReference type="GO" id="GO:0043231">
    <property type="term" value="C:intracellular membrane-bounded organelle"/>
    <property type="evidence" value="ECO:0000314"/>
    <property type="project" value="HPA"/>
</dbReference>
<dbReference type="GO" id="GO:0030496">
    <property type="term" value="C:midbody"/>
    <property type="evidence" value="ECO:0000314"/>
    <property type="project" value="HPA"/>
</dbReference>
<dbReference type="GO" id="GO:0005654">
    <property type="term" value="C:nucleoplasm"/>
    <property type="evidence" value="ECO:0000314"/>
    <property type="project" value="HPA"/>
</dbReference>
<dbReference type="GO" id="GO:0005634">
    <property type="term" value="C:nucleus"/>
    <property type="evidence" value="ECO:0000314"/>
    <property type="project" value="UniProtKB"/>
</dbReference>
<dbReference type="GO" id="GO:0048471">
    <property type="term" value="C:perinuclear region of cytoplasm"/>
    <property type="evidence" value="ECO:0007669"/>
    <property type="project" value="UniProtKB-SubCell"/>
</dbReference>
<dbReference type="GO" id="GO:0032991">
    <property type="term" value="C:protein-containing complex"/>
    <property type="evidence" value="ECO:0000314"/>
    <property type="project" value="UniProtKB"/>
</dbReference>
<dbReference type="GO" id="GO:0140297">
    <property type="term" value="F:DNA-binding transcription factor binding"/>
    <property type="evidence" value="ECO:0000353"/>
    <property type="project" value="UniProtKB"/>
</dbReference>
<dbReference type="GO" id="GO:0042826">
    <property type="term" value="F:histone deacetylase binding"/>
    <property type="evidence" value="ECO:0000353"/>
    <property type="project" value="UniProtKB"/>
</dbReference>
<dbReference type="GO" id="GO:0030674">
    <property type="term" value="F:protein-macromolecule adaptor activity"/>
    <property type="evidence" value="ECO:0000314"/>
    <property type="project" value="UniProtKB"/>
</dbReference>
<dbReference type="GO" id="GO:0003713">
    <property type="term" value="F:transcription coactivator activity"/>
    <property type="evidence" value="ECO:0007669"/>
    <property type="project" value="Ensembl"/>
</dbReference>
<dbReference type="GO" id="GO:0003714">
    <property type="term" value="F:transcription corepressor activity"/>
    <property type="evidence" value="ECO:0000314"/>
    <property type="project" value="UniProtKB"/>
</dbReference>
<dbReference type="GO" id="GO:0019730">
    <property type="term" value="P:antimicrobial humoral response"/>
    <property type="evidence" value="ECO:0007669"/>
    <property type="project" value="Ensembl"/>
</dbReference>
<dbReference type="GO" id="GO:0007249">
    <property type="term" value="P:canonical NF-kappaB signal transduction"/>
    <property type="evidence" value="ECO:0000314"/>
    <property type="project" value="UniProtKB"/>
</dbReference>
<dbReference type="GO" id="GO:0042742">
    <property type="term" value="P:defense response to bacterium"/>
    <property type="evidence" value="ECO:0007669"/>
    <property type="project" value="Ensembl"/>
</dbReference>
<dbReference type="GO" id="GO:0042832">
    <property type="term" value="P:defense response to protozoan"/>
    <property type="evidence" value="ECO:0007669"/>
    <property type="project" value="Ensembl"/>
</dbReference>
<dbReference type="GO" id="GO:0006974">
    <property type="term" value="P:DNA damage response"/>
    <property type="evidence" value="ECO:0000314"/>
    <property type="project" value="UniProtKB"/>
</dbReference>
<dbReference type="GO" id="GO:0030330">
    <property type="term" value="P:DNA damage response, signal transduction by p53 class mediator"/>
    <property type="evidence" value="ECO:0000315"/>
    <property type="project" value="UniProtKB"/>
</dbReference>
<dbReference type="GO" id="GO:0030198">
    <property type="term" value="P:extracellular matrix organization"/>
    <property type="evidence" value="ECO:0007669"/>
    <property type="project" value="Ensembl"/>
</dbReference>
<dbReference type="GO" id="GO:0002268">
    <property type="term" value="P:follicular dendritic cell differentiation"/>
    <property type="evidence" value="ECO:0007669"/>
    <property type="project" value="Ensembl"/>
</dbReference>
<dbReference type="GO" id="GO:0002467">
    <property type="term" value="P:germinal center formation"/>
    <property type="evidence" value="ECO:0007669"/>
    <property type="project" value="Ensembl"/>
</dbReference>
<dbReference type="GO" id="GO:0002455">
    <property type="term" value="P:humoral immune response mediated by circulating immunoglobulin"/>
    <property type="evidence" value="ECO:0007669"/>
    <property type="project" value="Ensembl"/>
</dbReference>
<dbReference type="GO" id="GO:0042771">
    <property type="term" value="P:intrinsic apoptotic signaling pathway in response to DNA damage by p53 class mediator"/>
    <property type="evidence" value="ECO:0000315"/>
    <property type="project" value="MGI"/>
</dbReference>
<dbReference type="GO" id="GO:0002315">
    <property type="term" value="P:marginal zone B cell differentiation"/>
    <property type="evidence" value="ECO:0007669"/>
    <property type="project" value="Ensembl"/>
</dbReference>
<dbReference type="GO" id="GO:0043066">
    <property type="term" value="P:negative regulation of apoptotic process"/>
    <property type="evidence" value="ECO:0000314"/>
    <property type="project" value="UniProtKB"/>
</dbReference>
<dbReference type="GO" id="GO:0045892">
    <property type="term" value="P:negative regulation of DNA-templated transcription"/>
    <property type="evidence" value="ECO:0000314"/>
    <property type="project" value="UniProtKB"/>
</dbReference>
<dbReference type="GO" id="GO:0032717">
    <property type="term" value="P:negative regulation of interleukin-8 production"/>
    <property type="evidence" value="ECO:0000315"/>
    <property type="project" value="UniProtKB"/>
</dbReference>
<dbReference type="GO" id="GO:0032088">
    <property type="term" value="P:negative regulation of NF-kappaB transcription factor activity"/>
    <property type="evidence" value="ECO:0000314"/>
    <property type="project" value="UniProtKB"/>
</dbReference>
<dbReference type="GO" id="GO:0046426">
    <property type="term" value="P:negative regulation of receptor signaling pathway via JAK-STAT"/>
    <property type="evidence" value="ECO:0000315"/>
    <property type="project" value="UniProtKB"/>
</dbReference>
<dbReference type="GO" id="GO:0070233">
    <property type="term" value="P:negative regulation of T cell apoptotic process"/>
    <property type="evidence" value="ECO:0007669"/>
    <property type="project" value="Ensembl"/>
</dbReference>
<dbReference type="GO" id="GO:0032720">
    <property type="term" value="P:negative regulation of tumor necrosis factor production"/>
    <property type="evidence" value="ECO:0007669"/>
    <property type="project" value="Ensembl"/>
</dbReference>
<dbReference type="GO" id="GO:0045893">
    <property type="term" value="P:positive regulation of DNA-templated transcription"/>
    <property type="evidence" value="ECO:0000314"/>
    <property type="project" value="UniProtKB"/>
</dbReference>
<dbReference type="GO" id="GO:0032733">
    <property type="term" value="P:positive regulation of interleukin-10 production"/>
    <property type="evidence" value="ECO:0007669"/>
    <property type="project" value="Ensembl"/>
</dbReference>
<dbReference type="GO" id="GO:0045944">
    <property type="term" value="P:positive regulation of transcription by RNA polymerase II"/>
    <property type="evidence" value="ECO:0007669"/>
    <property type="project" value="Ensembl"/>
</dbReference>
<dbReference type="GO" id="GO:0045727">
    <property type="term" value="P:positive regulation of translation"/>
    <property type="evidence" value="ECO:0000315"/>
    <property type="project" value="UniProtKB"/>
</dbReference>
<dbReference type="GO" id="GO:0032729">
    <property type="term" value="P:positive regulation of type II interferon production"/>
    <property type="evidence" value="ECO:0007669"/>
    <property type="project" value="Ensembl"/>
</dbReference>
<dbReference type="GO" id="GO:0006606">
    <property type="term" value="P:protein import into nucleus"/>
    <property type="evidence" value="ECO:0000314"/>
    <property type="project" value="UniProtKB"/>
</dbReference>
<dbReference type="GO" id="GO:0042981">
    <property type="term" value="P:regulation of apoptotic process"/>
    <property type="evidence" value="ECO:0000314"/>
    <property type="project" value="UniProtKB"/>
</dbReference>
<dbReference type="GO" id="GO:0051101">
    <property type="term" value="P:regulation of DNA binding"/>
    <property type="evidence" value="ECO:0000270"/>
    <property type="project" value="UniProtKB"/>
</dbReference>
<dbReference type="GO" id="GO:1901222">
    <property type="term" value="P:regulation of non-canonical NF-kappaB signal transduction"/>
    <property type="evidence" value="ECO:0000270"/>
    <property type="project" value="UniProtKB"/>
</dbReference>
<dbReference type="GO" id="GO:0010225">
    <property type="term" value="P:response to UV-C"/>
    <property type="evidence" value="ECO:0000314"/>
    <property type="project" value="UniProtKB"/>
</dbReference>
<dbReference type="GO" id="GO:0009615">
    <property type="term" value="P:response to virus"/>
    <property type="evidence" value="ECO:0000314"/>
    <property type="project" value="UniProtKB"/>
</dbReference>
<dbReference type="GO" id="GO:0048536">
    <property type="term" value="P:spleen development"/>
    <property type="evidence" value="ECO:0007669"/>
    <property type="project" value="Ensembl"/>
</dbReference>
<dbReference type="GO" id="GO:0070231">
    <property type="term" value="P:T cell apoptotic process"/>
    <property type="evidence" value="ECO:0007669"/>
    <property type="project" value="Ensembl"/>
</dbReference>
<dbReference type="GO" id="GO:0042088">
    <property type="term" value="P:T-helper 1 type immune response"/>
    <property type="evidence" value="ECO:0007669"/>
    <property type="project" value="Ensembl"/>
</dbReference>
<dbReference type="GO" id="GO:0045064">
    <property type="term" value="P:T-helper 2 cell differentiation"/>
    <property type="evidence" value="ECO:0007669"/>
    <property type="project" value="Ensembl"/>
</dbReference>
<dbReference type="FunFam" id="1.25.40.20:FF:000187">
    <property type="entry name" value="B-cell lymphoma 3 protein"/>
    <property type="match status" value="1"/>
</dbReference>
<dbReference type="Gene3D" id="1.25.40.20">
    <property type="entry name" value="Ankyrin repeat-containing domain"/>
    <property type="match status" value="1"/>
</dbReference>
<dbReference type="IDEAL" id="IID00445"/>
<dbReference type="InterPro" id="IPR002110">
    <property type="entry name" value="Ankyrin_rpt"/>
</dbReference>
<dbReference type="InterPro" id="IPR036770">
    <property type="entry name" value="Ankyrin_rpt-contain_sf"/>
</dbReference>
<dbReference type="InterPro" id="IPR051070">
    <property type="entry name" value="NF-kappa-B_inhibitor"/>
</dbReference>
<dbReference type="PANTHER" id="PTHR46680">
    <property type="entry name" value="NF-KAPPA-B INHIBITOR ALPHA"/>
    <property type="match status" value="1"/>
</dbReference>
<dbReference type="PANTHER" id="PTHR46680:SF2">
    <property type="entry name" value="NF-KAPPA-B INHIBITOR ZETA"/>
    <property type="match status" value="1"/>
</dbReference>
<dbReference type="Pfam" id="PF00023">
    <property type="entry name" value="Ank"/>
    <property type="match status" value="1"/>
</dbReference>
<dbReference type="Pfam" id="PF12796">
    <property type="entry name" value="Ank_2"/>
    <property type="match status" value="2"/>
</dbReference>
<dbReference type="PRINTS" id="PR01415">
    <property type="entry name" value="ANKYRIN"/>
</dbReference>
<dbReference type="SMART" id="SM00248">
    <property type="entry name" value="ANK"/>
    <property type="match status" value="6"/>
</dbReference>
<dbReference type="SUPFAM" id="SSF48403">
    <property type="entry name" value="Ankyrin repeat"/>
    <property type="match status" value="1"/>
</dbReference>
<dbReference type="PROSITE" id="PS50297">
    <property type="entry name" value="ANK_REP_REGION"/>
    <property type="match status" value="1"/>
</dbReference>
<dbReference type="PROSITE" id="PS50088">
    <property type="entry name" value="ANK_REPEAT"/>
    <property type="match status" value="5"/>
</dbReference>
<sequence length="454" mass="47584">MPRCPAGAMDEGPVDLRTRPKAAGLPGAALPLRKRPLRAPSPEPAAPRGAAGLVVPLDPLRGGCDLPAVPGPPHGLARPEALYYPGALLPLYPTRAMGSPFPLVNLPTPLYPMMCPMEHPLSADIAMATRADEDGDTPLHIAVVQGNLPAVHRLVNLFQQGGRELDIYNNLRQTPLHLAVITTLPSVVRLLVTAGASPMALDRHGQTAAHLACEHRSPTCLRALLDSAAPGTLDLEARNYDGLTALHVAVNTECQETVQLLLERGADIDAVDIKSGRSPLIHAVENNSLSMVQLLLQHGANVNAQMYSGSSALHSASGRGLLPLVRTLVRSGADSSLKNCHNDTPLMVARSRRVIDILRGKATRPASTSQPDPSPDRSANTSPESSSRLSSNGLLSASPSSSPSQSPPRDPPGFPMAPPNFFLPSPSPPAFLPFAGVLRGPGRPVPPSPAPGGS</sequence>
<protein>
    <recommendedName>
        <fullName>B-cell lymphoma 3 protein</fullName>
        <shortName>BCL-3</shortName>
    </recommendedName>
    <alternativeName>
        <fullName>Proto-oncogene BCL3</fullName>
    </alternativeName>
</protein>
<reference key="1">
    <citation type="journal article" date="1990" name="Cell">
        <title>The candidate proto-oncogene bcl-3 is related to genes implicated in cell lineage determination and cell cycle control.</title>
        <authorList>
            <person name="Ohno H."/>
            <person name="Takimoto G."/>
            <person name="McKeithan T.W."/>
        </authorList>
    </citation>
    <scope>NUCLEOTIDE SEQUENCE [GENOMIC DNA / MRNA]</scope>
    <scope>CHROMOSOMAL TRANSLOCATION</scope>
</reference>
<reference key="2">
    <citation type="journal article" date="2004" name="Genome Res.">
        <title>The status, quality, and expansion of the NIH full-length cDNA project: the Mammalian Gene Collection (MGC).</title>
        <authorList>
            <consortium name="The MGC Project Team"/>
        </authorList>
    </citation>
    <scope>NUCLEOTIDE SEQUENCE [LARGE SCALE MRNA]</scope>
    <source>
        <tissue>Lung</tissue>
    </source>
</reference>
<reference key="3">
    <citation type="journal article" date="1994" name="Genomics">
        <title>Genomic structure of the candidate proto-oncogene BCL3.</title>
        <authorList>
            <person name="McKeithan T.W."/>
            <person name="Ohno H."/>
            <person name="Dickstein J."/>
            <person name="Hume E."/>
        </authorList>
    </citation>
    <scope>NUCLEOTIDE SEQUENCE [GENOMIC DNA] OF 87-454</scope>
    <scope>CHROMOSOMAL TRANSLOCATION</scope>
    <source>
        <tissue>Leukemia</tissue>
    </source>
</reference>
<reference key="4">
    <citation type="journal article" date="1993" name="Cell">
        <title>The oncoprotein Bcl-3 directly transactivates through kappa B motifs via association with DNA-binding p50B homodimers.</title>
        <authorList>
            <person name="Bours V."/>
            <person name="Franzoso G."/>
            <person name="Azarenko V."/>
            <person name="Park S."/>
            <person name="Kanno T."/>
            <person name="Brown K."/>
            <person name="Siebenlist U."/>
        </authorList>
    </citation>
    <scope>FUNCTION</scope>
    <scope>IDENTIFICATION IN A COMPLEX WITH NFKB2/P52</scope>
</reference>
<reference key="5">
    <citation type="journal article" date="1999" name="EMBO J.">
        <title>NF-kappaB p105 is a target of IkappaB kinases and controls signal induction of Bcl-3-p50 complexes.</title>
        <authorList>
            <person name="Heissmeyer V."/>
            <person name="Krappmann D."/>
            <person name="Wulczyn F.G."/>
            <person name="Scheidereit C."/>
        </authorList>
    </citation>
    <scope>IDENTIFICATION IN A COMPLEX WITH NFKB1/P50</scope>
</reference>
<reference key="6">
    <citation type="journal article" date="1999" name="Oncogene">
        <title>The Bcl-3 oncoprotein acts as a bridging factor between NF-kappaB/Rel and nuclear co-regulators.</title>
        <authorList>
            <person name="Dechend R."/>
            <person name="Hirano F."/>
            <person name="Lehmann K."/>
            <person name="Heissmeyer V."/>
            <person name="Ansieau S."/>
            <person name="Wulczyn F.G."/>
            <person name="Scheidereit C."/>
            <person name="Leutz A."/>
        </authorList>
    </citation>
    <scope>INTERACTION WITH COPS5 AND PIR</scope>
</reference>
<reference key="7">
    <citation type="journal article" date="2003" name="J. Biol. Chem.">
        <title>Identification and characterization of BCL-3-binding protein: implications for transcription and DNA repair or recombination.</title>
        <authorList>
            <person name="Watanabe N."/>
            <person name="Wachi S."/>
            <person name="Fujita T."/>
        </authorList>
    </citation>
    <scope>INTERACTION WITH N4BP2</scope>
</reference>
<reference key="8">
    <citation type="journal article" date="2013" name="J. Proteome Res.">
        <title>Toward a comprehensive characterization of a human cancer cell phosphoproteome.</title>
        <authorList>
            <person name="Zhou H."/>
            <person name="Di Palma S."/>
            <person name="Preisinger C."/>
            <person name="Peng M."/>
            <person name="Polat A.N."/>
            <person name="Heck A.J."/>
            <person name="Mohammed S."/>
        </authorList>
    </citation>
    <scope>PHOSPHORYLATION [LARGE SCALE ANALYSIS] AT SER-41 AND SER-374</scope>
    <scope>IDENTIFICATION BY MASS SPECTROMETRY [LARGE SCALE ANALYSIS]</scope>
    <source>
        <tissue>Cervix carcinoma</tissue>
    </source>
</reference>
<reference key="9">
    <citation type="journal article" date="2001" name="EMBO J.">
        <title>Crystal structure of the ankyrin repeat domain of Bcl-3: a unique member of the IkappaB protein family.</title>
        <authorList>
            <person name="Michel F."/>
            <person name="Soler-Lopez M."/>
            <person name="Petosa C."/>
            <person name="Cramer P."/>
            <person name="Siebenlist U."/>
            <person name="Muller C.W."/>
        </authorList>
    </citation>
    <scope>X-RAY CRYSTALLOGRAPHY (1.86 ANGSTROMS) OF 127-367</scope>
</reference>
<reference key="10">
    <citation type="journal article" date="2004" name="Mol. Cell">
        <title>GSK3-mediated BCL-3 phosphorylation modulates its degradation and its oncogenicity.</title>
        <authorList>
            <person name="Viatour P."/>
            <person name="Dejardin E."/>
            <person name="Warnier M."/>
            <person name="Lair F."/>
            <person name="Claudio E."/>
            <person name="Bureau F."/>
            <person name="Marine J.C."/>
            <person name="Merville M.P."/>
            <person name="Maurer U."/>
            <person name="Green D."/>
            <person name="Piette J."/>
            <person name="Siebenlist U."/>
            <person name="Bours V."/>
            <person name="Chariot A."/>
        </authorList>
    </citation>
    <scope>PHOSPHORYLATION AT SER-402 AND SER-406</scope>
</reference>
<gene>
    <name type="primary">BCL3</name>
    <name type="synonym">BCL4</name>
    <name type="synonym">D19S37</name>
</gene>
<evidence type="ECO:0000250" key="1"/>
<evidence type="ECO:0000256" key="2">
    <source>
        <dbReference type="SAM" id="MobiDB-lite"/>
    </source>
</evidence>
<evidence type="ECO:0000269" key="3">
    <source>
    </source>
</evidence>
<evidence type="ECO:0000269" key="4">
    <source>
    </source>
</evidence>
<evidence type="ECO:0000269" key="5">
    <source>
    </source>
</evidence>
<evidence type="ECO:0000269" key="6">
    <source>
    </source>
</evidence>
<evidence type="ECO:0000305" key="7"/>
<evidence type="ECO:0007744" key="8">
    <source>
    </source>
</evidence>
<evidence type="ECO:0007829" key="9">
    <source>
        <dbReference type="PDB" id="1K1A"/>
    </source>
</evidence>
<proteinExistence type="evidence at protein level"/>
<accession>P20749</accession>
<name>BCL3_HUMAN</name>
<organism>
    <name type="scientific">Homo sapiens</name>
    <name type="common">Human</name>
    <dbReference type="NCBI Taxonomy" id="9606"/>
    <lineage>
        <taxon>Eukaryota</taxon>
        <taxon>Metazoa</taxon>
        <taxon>Chordata</taxon>
        <taxon>Craniata</taxon>
        <taxon>Vertebrata</taxon>
        <taxon>Euteleostomi</taxon>
        <taxon>Mammalia</taxon>
        <taxon>Eutheria</taxon>
        <taxon>Euarchontoglires</taxon>
        <taxon>Primates</taxon>
        <taxon>Haplorrhini</taxon>
        <taxon>Catarrhini</taxon>
        <taxon>Hominidae</taxon>
        <taxon>Homo</taxon>
    </lineage>
</organism>